<accession>A1BDJ5</accession>
<comment type="function">
    <text evidence="1">Catalyzes the conversion of 1-hydroxy-2-methyl-2-(E)-butenyl 4-diphosphate (HMBPP) into a mixture of isopentenyl diphosphate (IPP) and dimethylallyl diphosphate (DMAPP). Acts in the terminal step of the DOXP/MEP pathway for isoprenoid precursor biosynthesis.</text>
</comment>
<comment type="catalytic activity">
    <reaction evidence="1">
        <text>isopentenyl diphosphate + 2 oxidized [2Fe-2S]-[ferredoxin] + H2O = (2E)-4-hydroxy-3-methylbut-2-enyl diphosphate + 2 reduced [2Fe-2S]-[ferredoxin] + 2 H(+)</text>
        <dbReference type="Rhea" id="RHEA:24488"/>
        <dbReference type="Rhea" id="RHEA-COMP:10000"/>
        <dbReference type="Rhea" id="RHEA-COMP:10001"/>
        <dbReference type="ChEBI" id="CHEBI:15377"/>
        <dbReference type="ChEBI" id="CHEBI:15378"/>
        <dbReference type="ChEBI" id="CHEBI:33737"/>
        <dbReference type="ChEBI" id="CHEBI:33738"/>
        <dbReference type="ChEBI" id="CHEBI:128753"/>
        <dbReference type="ChEBI" id="CHEBI:128769"/>
        <dbReference type="EC" id="1.17.7.4"/>
    </reaction>
</comment>
<comment type="catalytic activity">
    <reaction evidence="1">
        <text>dimethylallyl diphosphate + 2 oxidized [2Fe-2S]-[ferredoxin] + H2O = (2E)-4-hydroxy-3-methylbut-2-enyl diphosphate + 2 reduced [2Fe-2S]-[ferredoxin] + 2 H(+)</text>
        <dbReference type="Rhea" id="RHEA:24825"/>
        <dbReference type="Rhea" id="RHEA-COMP:10000"/>
        <dbReference type="Rhea" id="RHEA-COMP:10001"/>
        <dbReference type="ChEBI" id="CHEBI:15377"/>
        <dbReference type="ChEBI" id="CHEBI:15378"/>
        <dbReference type="ChEBI" id="CHEBI:33737"/>
        <dbReference type="ChEBI" id="CHEBI:33738"/>
        <dbReference type="ChEBI" id="CHEBI:57623"/>
        <dbReference type="ChEBI" id="CHEBI:128753"/>
        <dbReference type="EC" id="1.17.7.4"/>
    </reaction>
</comment>
<comment type="cofactor">
    <cofactor evidence="1">
        <name>[4Fe-4S] cluster</name>
        <dbReference type="ChEBI" id="CHEBI:49883"/>
    </cofactor>
    <text evidence="1">Binds 1 [4Fe-4S] cluster per subunit.</text>
</comment>
<comment type="pathway">
    <text evidence="1">Isoprenoid biosynthesis; dimethylallyl diphosphate biosynthesis; dimethylallyl diphosphate from (2E)-4-hydroxy-3-methylbutenyl diphosphate: step 1/1.</text>
</comment>
<comment type="pathway">
    <text evidence="1">Isoprenoid biosynthesis; isopentenyl diphosphate biosynthesis via DXP pathway; isopentenyl diphosphate from 1-deoxy-D-xylulose 5-phosphate: step 6/6.</text>
</comment>
<comment type="similarity">
    <text evidence="1">Belongs to the IspH family.</text>
</comment>
<keyword id="KW-0004">4Fe-4S</keyword>
<keyword id="KW-0408">Iron</keyword>
<keyword id="KW-0411">Iron-sulfur</keyword>
<keyword id="KW-0414">Isoprene biosynthesis</keyword>
<keyword id="KW-0479">Metal-binding</keyword>
<keyword id="KW-0560">Oxidoreductase</keyword>
<keyword id="KW-1185">Reference proteome</keyword>
<feature type="chain" id="PRO_1000021101" description="4-hydroxy-3-methylbut-2-enyl diphosphate reductase">
    <location>
        <begin position="1"/>
        <end position="328"/>
    </location>
</feature>
<feature type="active site" description="Proton donor" evidence="1">
    <location>
        <position position="127"/>
    </location>
</feature>
<feature type="binding site" evidence="1">
    <location>
        <position position="13"/>
    </location>
    <ligand>
        <name>[4Fe-4S] cluster</name>
        <dbReference type="ChEBI" id="CHEBI:49883"/>
    </ligand>
</feature>
<feature type="binding site" evidence="1">
    <location>
        <position position="41"/>
    </location>
    <ligand>
        <name>(2E)-4-hydroxy-3-methylbut-2-enyl diphosphate</name>
        <dbReference type="ChEBI" id="CHEBI:128753"/>
    </ligand>
</feature>
<feature type="binding site" evidence="1">
    <location>
        <position position="41"/>
    </location>
    <ligand>
        <name>dimethylallyl diphosphate</name>
        <dbReference type="ChEBI" id="CHEBI:57623"/>
    </ligand>
</feature>
<feature type="binding site" evidence="1">
    <location>
        <position position="41"/>
    </location>
    <ligand>
        <name>isopentenyl diphosphate</name>
        <dbReference type="ChEBI" id="CHEBI:128769"/>
    </ligand>
</feature>
<feature type="binding site" evidence="1">
    <location>
        <position position="75"/>
    </location>
    <ligand>
        <name>(2E)-4-hydroxy-3-methylbut-2-enyl diphosphate</name>
        <dbReference type="ChEBI" id="CHEBI:128753"/>
    </ligand>
</feature>
<feature type="binding site" evidence="1">
    <location>
        <position position="75"/>
    </location>
    <ligand>
        <name>dimethylallyl diphosphate</name>
        <dbReference type="ChEBI" id="CHEBI:57623"/>
    </ligand>
</feature>
<feature type="binding site" evidence="1">
    <location>
        <position position="75"/>
    </location>
    <ligand>
        <name>isopentenyl diphosphate</name>
        <dbReference type="ChEBI" id="CHEBI:128769"/>
    </ligand>
</feature>
<feature type="binding site" evidence="1">
    <location>
        <position position="97"/>
    </location>
    <ligand>
        <name>[4Fe-4S] cluster</name>
        <dbReference type="ChEBI" id="CHEBI:49883"/>
    </ligand>
</feature>
<feature type="binding site" evidence="1">
    <location>
        <position position="125"/>
    </location>
    <ligand>
        <name>(2E)-4-hydroxy-3-methylbut-2-enyl diphosphate</name>
        <dbReference type="ChEBI" id="CHEBI:128753"/>
    </ligand>
</feature>
<feature type="binding site" evidence="1">
    <location>
        <position position="125"/>
    </location>
    <ligand>
        <name>dimethylallyl diphosphate</name>
        <dbReference type="ChEBI" id="CHEBI:57623"/>
    </ligand>
</feature>
<feature type="binding site" evidence="1">
    <location>
        <position position="125"/>
    </location>
    <ligand>
        <name>isopentenyl diphosphate</name>
        <dbReference type="ChEBI" id="CHEBI:128769"/>
    </ligand>
</feature>
<feature type="binding site" evidence="1">
    <location>
        <position position="168"/>
    </location>
    <ligand>
        <name>(2E)-4-hydroxy-3-methylbut-2-enyl diphosphate</name>
        <dbReference type="ChEBI" id="CHEBI:128753"/>
    </ligand>
</feature>
<feature type="binding site" evidence="1">
    <location>
        <position position="229"/>
    </location>
    <ligand>
        <name>[4Fe-4S] cluster</name>
        <dbReference type="ChEBI" id="CHEBI:49883"/>
    </ligand>
</feature>
<feature type="binding site" evidence="1">
    <location>
        <position position="257"/>
    </location>
    <ligand>
        <name>(2E)-4-hydroxy-3-methylbut-2-enyl diphosphate</name>
        <dbReference type="ChEBI" id="CHEBI:128753"/>
    </ligand>
</feature>
<feature type="binding site" evidence="1">
    <location>
        <position position="257"/>
    </location>
    <ligand>
        <name>dimethylallyl diphosphate</name>
        <dbReference type="ChEBI" id="CHEBI:57623"/>
    </ligand>
</feature>
<feature type="binding site" evidence="1">
    <location>
        <position position="257"/>
    </location>
    <ligand>
        <name>isopentenyl diphosphate</name>
        <dbReference type="ChEBI" id="CHEBI:128769"/>
    </ligand>
</feature>
<feature type="binding site" evidence="1">
    <location>
        <position position="258"/>
    </location>
    <ligand>
        <name>(2E)-4-hydroxy-3-methylbut-2-enyl diphosphate</name>
        <dbReference type="ChEBI" id="CHEBI:128753"/>
    </ligand>
</feature>
<feature type="binding site" evidence="1">
    <location>
        <position position="258"/>
    </location>
    <ligand>
        <name>dimethylallyl diphosphate</name>
        <dbReference type="ChEBI" id="CHEBI:57623"/>
    </ligand>
</feature>
<feature type="binding site" evidence="1">
    <location>
        <position position="258"/>
    </location>
    <ligand>
        <name>isopentenyl diphosphate</name>
        <dbReference type="ChEBI" id="CHEBI:128769"/>
    </ligand>
</feature>
<feature type="binding site" evidence="1">
    <location>
        <position position="259"/>
    </location>
    <ligand>
        <name>(2E)-4-hydroxy-3-methylbut-2-enyl diphosphate</name>
        <dbReference type="ChEBI" id="CHEBI:128753"/>
    </ligand>
</feature>
<feature type="binding site" evidence="1">
    <location>
        <position position="259"/>
    </location>
    <ligand>
        <name>dimethylallyl diphosphate</name>
        <dbReference type="ChEBI" id="CHEBI:57623"/>
    </ligand>
</feature>
<feature type="binding site" evidence="1">
    <location>
        <position position="259"/>
    </location>
    <ligand>
        <name>isopentenyl diphosphate</name>
        <dbReference type="ChEBI" id="CHEBI:128769"/>
    </ligand>
</feature>
<feature type="binding site" evidence="1">
    <location>
        <position position="306"/>
    </location>
    <ligand>
        <name>(2E)-4-hydroxy-3-methylbut-2-enyl diphosphate</name>
        <dbReference type="ChEBI" id="CHEBI:128753"/>
    </ligand>
</feature>
<feature type="binding site" evidence="1">
    <location>
        <position position="306"/>
    </location>
    <ligand>
        <name>dimethylallyl diphosphate</name>
        <dbReference type="ChEBI" id="CHEBI:57623"/>
    </ligand>
</feature>
<feature type="binding site" evidence="1">
    <location>
        <position position="306"/>
    </location>
    <ligand>
        <name>isopentenyl diphosphate</name>
        <dbReference type="ChEBI" id="CHEBI:128769"/>
    </ligand>
</feature>
<organism>
    <name type="scientific">Chlorobium phaeobacteroides (strain DSM 266 / SMG 266 / 2430)</name>
    <dbReference type="NCBI Taxonomy" id="290317"/>
    <lineage>
        <taxon>Bacteria</taxon>
        <taxon>Pseudomonadati</taxon>
        <taxon>Chlorobiota</taxon>
        <taxon>Chlorobiia</taxon>
        <taxon>Chlorobiales</taxon>
        <taxon>Chlorobiaceae</taxon>
        <taxon>Chlorobium/Pelodictyon group</taxon>
        <taxon>Chlorobium</taxon>
    </lineage>
</organism>
<evidence type="ECO:0000255" key="1">
    <source>
        <dbReference type="HAMAP-Rule" id="MF_00191"/>
    </source>
</evidence>
<sequence>MKINLDRTSSGFCIGVQGTIHVAEEKLNNPDKLFSLGDVVHNEAEVNRLEHLGLTTIDESGFHELKNAQLLIRAHGEPPSTYRIAEKNNLVITDTTCPVVSRLQRTARLLHELGYQIIIYGKPSHPEVIGINGHCKNSAVIIKHPDLSDPSETGQIDLKRKTALISQTTMDVPGFYELKANIRNLFAADSEEIRNENDHLWMAIRDIDLTASLTGIRDMPRYVYKDTICRQVSSRNQMLHDFAIANSCVIFVAGKKSSNGQVLFGICKAANPCTYFIEDIDEIDDAWLTGSDGRTVESVGICGATSTPMWLLEKVAAHLQRRYNHDPA</sequence>
<proteinExistence type="inferred from homology"/>
<protein>
    <recommendedName>
        <fullName evidence="1">4-hydroxy-3-methylbut-2-enyl diphosphate reductase</fullName>
        <shortName evidence="1">HMBPP reductase</shortName>
        <ecNumber evidence="1">1.17.7.4</ecNumber>
    </recommendedName>
</protein>
<reference key="1">
    <citation type="submission" date="2006-12" db="EMBL/GenBank/DDBJ databases">
        <title>Complete sequence of Chlorobium phaeobacteroides DSM 266.</title>
        <authorList>
            <consortium name="US DOE Joint Genome Institute"/>
            <person name="Copeland A."/>
            <person name="Lucas S."/>
            <person name="Lapidus A."/>
            <person name="Barry K."/>
            <person name="Detter J.C."/>
            <person name="Glavina del Rio T."/>
            <person name="Hammon N."/>
            <person name="Israni S."/>
            <person name="Pitluck S."/>
            <person name="Goltsman E."/>
            <person name="Schmutz J."/>
            <person name="Larimer F."/>
            <person name="Land M."/>
            <person name="Hauser L."/>
            <person name="Mikhailova N."/>
            <person name="Li T."/>
            <person name="Overmann J."/>
            <person name="Bryant D.A."/>
            <person name="Richardson P."/>
        </authorList>
    </citation>
    <scope>NUCLEOTIDE SEQUENCE [LARGE SCALE GENOMIC DNA]</scope>
    <source>
        <strain>DSM 266 / SMG 266 / 2430</strain>
    </source>
</reference>
<name>ISPH_CHLPD</name>
<gene>
    <name evidence="1" type="primary">ispH</name>
    <name type="ordered locus">Cpha266_0414</name>
</gene>
<dbReference type="EC" id="1.17.7.4" evidence="1"/>
<dbReference type="EMBL" id="CP000492">
    <property type="protein sequence ID" value="ABL64472.1"/>
    <property type="molecule type" value="Genomic_DNA"/>
</dbReference>
<dbReference type="RefSeq" id="WP_011744305.1">
    <property type="nucleotide sequence ID" value="NC_008639.1"/>
</dbReference>
<dbReference type="SMR" id="A1BDJ5"/>
<dbReference type="STRING" id="290317.Cpha266_0414"/>
<dbReference type="KEGG" id="cph:Cpha266_0414"/>
<dbReference type="eggNOG" id="COG0761">
    <property type="taxonomic scope" value="Bacteria"/>
</dbReference>
<dbReference type="HOGENOM" id="CLU_027486_0_1_10"/>
<dbReference type="OrthoDB" id="9777362at2"/>
<dbReference type="UniPathway" id="UPA00056">
    <property type="reaction ID" value="UER00097"/>
</dbReference>
<dbReference type="UniPathway" id="UPA00059">
    <property type="reaction ID" value="UER00105"/>
</dbReference>
<dbReference type="Proteomes" id="UP000008701">
    <property type="component" value="Chromosome"/>
</dbReference>
<dbReference type="GO" id="GO:0051539">
    <property type="term" value="F:4 iron, 4 sulfur cluster binding"/>
    <property type="evidence" value="ECO:0007669"/>
    <property type="project" value="UniProtKB-UniRule"/>
</dbReference>
<dbReference type="GO" id="GO:0051745">
    <property type="term" value="F:4-hydroxy-3-methylbut-2-enyl diphosphate reductase activity"/>
    <property type="evidence" value="ECO:0007669"/>
    <property type="project" value="UniProtKB-UniRule"/>
</dbReference>
<dbReference type="GO" id="GO:0046872">
    <property type="term" value="F:metal ion binding"/>
    <property type="evidence" value="ECO:0007669"/>
    <property type="project" value="UniProtKB-KW"/>
</dbReference>
<dbReference type="GO" id="GO:0050992">
    <property type="term" value="P:dimethylallyl diphosphate biosynthetic process"/>
    <property type="evidence" value="ECO:0007669"/>
    <property type="project" value="UniProtKB-UniRule"/>
</dbReference>
<dbReference type="GO" id="GO:0019288">
    <property type="term" value="P:isopentenyl diphosphate biosynthetic process, methylerythritol 4-phosphate pathway"/>
    <property type="evidence" value="ECO:0007669"/>
    <property type="project" value="UniProtKB-UniRule"/>
</dbReference>
<dbReference type="GO" id="GO:0016114">
    <property type="term" value="P:terpenoid biosynthetic process"/>
    <property type="evidence" value="ECO:0007669"/>
    <property type="project" value="UniProtKB-UniRule"/>
</dbReference>
<dbReference type="CDD" id="cd13944">
    <property type="entry name" value="lytB_ispH"/>
    <property type="match status" value="1"/>
</dbReference>
<dbReference type="Gene3D" id="3.40.50.11270">
    <property type="match status" value="1"/>
</dbReference>
<dbReference type="Gene3D" id="3.40.1010.20">
    <property type="entry name" value="4-hydroxy-3-methylbut-2-enyl diphosphate reductase, catalytic domain"/>
    <property type="match status" value="2"/>
</dbReference>
<dbReference type="HAMAP" id="MF_00191">
    <property type="entry name" value="IspH"/>
    <property type="match status" value="1"/>
</dbReference>
<dbReference type="InterPro" id="IPR003451">
    <property type="entry name" value="LytB/IspH"/>
</dbReference>
<dbReference type="NCBIfam" id="NF002187">
    <property type="entry name" value="PRK01045.1-1"/>
    <property type="match status" value="1"/>
</dbReference>
<dbReference type="PANTHER" id="PTHR30426">
    <property type="entry name" value="4-HYDROXY-3-METHYLBUT-2-ENYL DIPHOSPHATE REDUCTASE"/>
    <property type="match status" value="1"/>
</dbReference>
<dbReference type="PANTHER" id="PTHR30426:SF0">
    <property type="entry name" value="4-HYDROXY-3-METHYLBUT-2-ENYL DIPHOSPHATE REDUCTASE"/>
    <property type="match status" value="1"/>
</dbReference>
<dbReference type="Pfam" id="PF02401">
    <property type="entry name" value="LYTB"/>
    <property type="match status" value="1"/>
</dbReference>